<protein>
    <recommendedName>
        <fullName evidence="1">Ribosomal RNA small subunit methyltransferase F</fullName>
        <ecNumber evidence="1">2.1.1.178</ecNumber>
    </recommendedName>
    <alternativeName>
        <fullName evidence="1">16S rRNA m5C1407 methyltransferase</fullName>
    </alternativeName>
    <alternativeName>
        <fullName evidence="1">rRNA (cytosine-C(5)-)-methyltransferase RsmF</fullName>
    </alternativeName>
</protein>
<gene>
    <name evidence="1" type="primary">rsmF</name>
    <name type="ordered locus">Sbal_2455</name>
</gene>
<proteinExistence type="inferred from homology"/>
<reference key="1">
    <citation type="submission" date="2007-02" db="EMBL/GenBank/DDBJ databases">
        <title>Complete sequence of chromosome of Shewanella baltica OS155.</title>
        <authorList>
            <consortium name="US DOE Joint Genome Institute"/>
            <person name="Copeland A."/>
            <person name="Lucas S."/>
            <person name="Lapidus A."/>
            <person name="Barry K."/>
            <person name="Detter J.C."/>
            <person name="Glavina del Rio T."/>
            <person name="Hammon N."/>
            <person name="Israni S."/>
            <person name="Dalin E."/>
            <person name="Tice H."/>
            <person name="Pitluck S."/>
            <person name="Sims D.R."/>
            <person name="Brettin T."/>
            <person name="Bruce D."/>
            <person name="Han C."/>
            <person name="Tapia R."/>
            <person name="Brainard J."/>
            <person name="Schmutz J."/>
            <person name="Larimer F."/>
            <person name="Land M."/>
            <person name="Hauser L."/>
            <person name="Kyrpides N."/>
            <person name="Mikhailova N."/>
            <person name="Brettar I."/>
            <person name="Klappenbach J."/>
            <person name="Konstantinidis K."/>
            <person name="Rodrigues J."/>
            <person name="Tiedje J."/>
            <person name="Richardson P."/>
        </authorList>
    </citation>
    <scope>NUCLEOTIDE SEQUENCE [LARGE SCALE GENOMIC DNA]</scope>
    <source>
        <strain>OS155 / ATCC BAA-1091</strain>
    </source>
</reference>
<accession>A3D5D5</accession>
<sequence>MVQLNQNFIDTITQELPAHLSMDEFIAACDKPLRRSIRVNTLKISSDDFKTLMQPKGWTFDPIPWCEDGFWISYDEEEQLGNALEHIQGLFYIQEASSMLPPTALFTPSAFTTSAKWQCVLDLASAPGSKTTQMAALMQNQGLLVANEYSASRVKVLHANVLRMGASHCALTHFDGRVFGEYLYESFDAVLIDAPCGGEGTVRKDADALKHWSLDDVLAISETQKALIESAFLALKPGGSLVYSTCTLNRLENQGVCEYLKQVYGDAVQFESLSDLFDGADRATTAEGFLHVWPQIYDSEGFFVAKLTKTASVPRLLPEPKLQKNFPFTTASAKQAQGIKDYFQQDLGISLPDELIMVRDDEFWLFPHEFNAFIGRMRFQRIGIKLADNSKHGFKVRHEAIIALAGKQLSPTAKTVDVSDVEAKEYLMGRDIPLATAGKAQGEVIVCYGGAPLGMAKHLGNKLKNNLPRDLVKDKVLLLPEQTKSL</sequence>
<organism>
    <name type="scientific">Shewanella baltica (strain OS155 / ATCC BAA-1091)</name>
    <dbReference type="NCBI Taxonomy" id="325240"/>
    <lineage>
        <taxon>Bacteria</taxon>
        <taxon>Pseudomonadati</taxon>
        <taxon>Pseudomonadota</taxon>
        <taxon>Gammaproteobacteria</taxon>
        <taxon>Alteromonadales</taxon>
        <taxon>Shewanellaceae</taxon>
        <taxon>Shewanella</taxon>
    </lineage>
</organism>
<dbReference type="EC" id="2.1.1.178" evidence="1"/>
<dbReference type="EMBL" id="CP000563">
    <property type="protein sequence ID" value="ABN61948.1"/>
    <property type="status" value="ALT_INIT"/>
    <property type="molecule type" value="Genomic_DNA"/>
</dbReference>
<dbReference type="RefSeq" id="WP_086011375.1">
    <property type="nucleotide sequence ID" value="NC_009052.1"/>
</dbReference>
<dbReference type="SMR" id="A3D5D5"/>
<dbReference type="STRING" id="325240.Sbal_2455"/>
<dbReference type="KEGG" id="sbl:Sbal_2455"/>
<dbReference type="HOGENOM" id="CLU_005316_6_2_6"/>
<dbReference type="OrthoDB" id="9810297at2"/>
<dbReference type="Proteomes" id="UP000001557">
    <property type="component" value="Chromosome"/>
</dbReference>
<dbReference type="GO" id="GO:0005737">
    <property type="term" value="C:cytoplasm"/>
    <property type="evidence" value="ECO:0007669"/>
    <property type="project" value="UniProtKB-SubCell"/>
</dbReference>
<dbReference type="GO" id="GO:0003723">
    <property type="term" value="F:RNA binding"/>
    <property type="evidence" value="ECO:0007669"/>
    <property type="project" value="UniProtKB-KW"/>
</dbReference>
<dbReference type="GO" id="GO:0009383">
    <property type="term" value="F:rRNA (cytosine-C5-)-methyltransferase activity"/>
    <property type="evidence" value="ECO:0007669"/>
    <property type="project" value="TreeGrafter"/>
</dbReference>
<dbReference type="GO" id="GO:0070475">
    <property type="term" value="P:rRNA base methylation"/>
    <property type="evidence" value="ECO:0007669"/>
    <property type="project" value="TreeGrafter"/>
</dbReference>
<dbReference type="CDD" id="cd02440">
    <property type="entry name" value="AdoMet_MTases"/>
    <property type="match status" value="1"/>
</dbReference>
<dbReference type="Gene3D" id="3.10.450.720">
    <property type="match status" value="1"/>
</dbReference>
<dbReference type="Gene3D" id="3.40.50.150">
    <property type="entry name" value="Vaccinia Virus protein VP39"/>
    <property type="match status" value="1"/>
</dbReference>
<dbReference type="HAMAP" id="MF_01579">
    <property type="entry name" value="16SrRNA_methyltr_F"/>
    <property type="match status" value="1"/>
</dbReference>
<dbReference type="InterPro" id="IPR031341">
    <property type="entry name" value="Methyltr_RsmF_N"/>
</dbReference>
<dbReference type="InterPro" id="IPR049560">
    <property type="entry name" value="MeTrfase_RsmB-F_NOP2_cat"/>
</dbReference>
<dbReference type="InterPro" id="IPR001678">
    <property type="entry name" value="MeTrfase_RsmB-F_NOP2_dom"/>
</dbReference>
<dbReference type="InterPro" id="IPR027391">
    <property type="entry name" value="Nol1_Nop2_Fmu_2"/>
</dbReference>
<dbReference type="InterPro" id="IPR011023">
    <property type="entry name" value="Nop2p"/>
</dbReference>
<dbReference type="InterPro" id="IPR023267">
    <property type="entry name" value="RCMT"/>
</dbReference>
<dbReference type="InterPro" id="IPR023545">
    <property type="entry name" value="rRNA_ssu_MeTfrase_F"/>
</dbReference>
<dbReference type="InterPro" id="IPR029063">
    <property type="entry name" value="SAM-dependent_MTases_sf"/>
</dbReference>
<dbReference type="InterPro" id="IPR048457">
    <property type="entry name" value="YebU_pre-PUA_dom"/>
</dbReference>
<dbReference type="NCBIfam" id="TIGR00446">
    <property type="entry name" value="nop2p"/>
    <property type="match status" value="1"/>
</dbReference>
<dbReference type="NCBIfam" id="NF008898">
    <property type="entry name" value="PRK11933.1"/>
    <property type="match status" value="1"/>
</dbReference>
<dbReference type="PANTHER" id="PTHR22807:SF30">
    <property type="entry name" value="28S RRNA (CYTOSINE(4447)-C(5))-METHYLTRANSFERASE-RELATED"/>
    <property type="match status" value="1"/>
</dbReference>
<dbReference type="PANTHER" id="PTHR22807">
    <property type="entry name" value="NOP2 YEAST -RELATED NOL1/NOP2/FMU SUN DOMAIN-CONTAINING"/>
    <property type="match status" value="1"/>
</dbReference>
<dbReference type="Pfam" id="PF01189">
    <property type="entry name" value="Methyltr_RsmB-F"/>
    <property type="match status" value="1"/>
</dbReference>
<dbReference type="Pfam" id="PF17125">
    <property type="entry name" value="Methyltr_RsmF_N"/>
    <property type="match status" value="1"/>
</dbReference>
<dbReference type="Pfam" id="PF13636">
    <property type="entry name" value="Methyltranf_PUA"/>
    <property type="match status" value="1"/>
</dbReference>
<dbReference type="Pfam" id="PF21150">
    <property type="entry name" value="YebU_pre-PUA_dom"/>
    <property type="match status" value="1"/>
</dbReference>
<dbReference type="PRINTS" id="PR02008">
    <property type="entry name" value="RCMTFAMILY"/>
</dbReference>
<dbReference type="SUPFAM" id="SSF53335">
    <property type="entry name" value="S-adenosyl-L-methionine-dependent methyltransferases"/>
    <property type="match status" value="1"/>
</dbReference>
<dbReference type="PROSITE" id="PS51686">
    <property type="entry name" value="SAM_MT_RSMB_NOP"/>
    <property type="match status" value="1"/>
</dbReference>
<evidence type="ECO:0000255" key="1">
    <source>
        <dbReference type="HAMAP-Rule" id="MF_01579"/>
    </source>
</evidence>
<evidence type="ECO:0000305" key="2"/>
<comment type="function">
    <text evidence="1">Specifically methylates the cytosine at position 1407 (m5C1407) of 16S rRNA.</text>
</comment>
<comment type="catalytic activity">
    <reaction evidence="1">
        <text>cytidine(1407) in 16S rRNA + S-adenosyl-L-methionine = 5-methylcytidine(1407) in 16S rRNA + S-adenosyl-L-homocysteine + H(+)</text>
        <dbReference type="Rhea" id="RHEA:42756"/>
        <dbReference type="Rhea" id="RHEA-COMP:10223"/>
        <dbReference type="Rhea" id="RHEA-COMP:10224"/>
        <dbReference type="ChEBI" id="CHEBI:15378"/>
        <dbReference type="ChEBI" id="CHEBI:57856"/>
        <dbReference type="ChEBI" id="CHEBI:59789"/>
        <dbReference type="ChEBI" id="CHEBI:74483"/>
        <dbReference type="ChEBI" id="CHEBI:82748"/>
        <dbReference type="EC" id="2.1.1.178"/>
    </reaction>
</comment>
<comment type="subcellular location">
    <subcellularLocation>
        <location evidence="1">Cytoplasm</location>
    </subcellularLocation>
</comment>
<comment type="similarity">
    <text evidence="1">Belongs to the class I-like SAM-binding methyltransferase superfamily. RsmB/NOP family.</text>
</comment>
<comment type="sequence caution" evidence="2">
    <conflict type="erroneous initiation">
        <sequence resource="EMBL-CDS" id="ABN61948"/>
    </conflict>
</comment>
<keyword id="KW-0963">Cytoplasm</keyword>
<keyword id="KW-0489">Methyltransferase</keyword>
<keyword id="KW-1185">Reference proteome</keyword>
<keyword id="KW-0694">RNA-binding</keyword>
<keyword id="KW-0698">rRNA processing</keyword>
<keyword id="KW-0949">S-adenosyl-L-methionine</keyword>
<keyword id="KW-0808">Transferase</keyword>
<feature type="chain" id="PRO_0000382584" description="Ribosomal RNA small subunit methyltransferase F">
    <location>
        <begin position="1"/>
        <end position="486"/>
    </location>
</feature>
<feature type="active site" description="Nucleophile" evidence="1">
    <location>
        <position position="246"/>
    </location>
</feature>
<feature type="binding site" evidence="1">
    <location>
        <begin position="124"/>
        <end position="130"/>
    </location>
    <ligand>
        <name>S-adenosyl-L-methionine</name>
        <dbReference type="ChEBI" id="CHEBI:59789"/>
    </ligand>
</feature>
<feature type="binding site" evidence="1">
    <location>
        <position position="148"/>
    </location>
    <ligand>
        <name>S-adenosyl-L-methionine</name>
        <dbReference type="ChEBI" id="CHEBI:59789"/>
    </ligand>
</feature>
<feature type="binding site" evidence="1">
    <location>
        <position position="175"/>
    </location>
    <ligand>
        <name>S-adenosyl-L-methionine</name>
        <dbReference type="ChEBI" id="CHEBI:59789"/>
    </ligand>
</feature>
<feature type="binding site" evidence="1">
    <location>
        <position position="193"/>
    </location>
    <ligand>
        <name>S-adenosyl-L-methionine</name>
        <dbReference type="ChEBI" id="CHEBI:59789"/>
    </ligand>
</feature>
<name>RSMF_SHEB5</name>